<dbReference type="EC" id="2.7.11.10" evidence="2"/>
<dbReference type="EMBL" id="AJ720520">
    <property type="protein sequence ID" value="CAG32179.1"/>
    <property type="molecule type" value="mRNA"/>
</dbReference>
<dbReference type="RefSeq" id="NP_001012922.1">
    <property type="nucleotide sequence ID" value="NM_001012904.1"/>
</dbReference>
<dbReference type="SMR" id="Q5ZJB4"/>
<dbReference type="FunCoup" id="Q5ZJB4">
    <property type="interactions" value="1286"/>
</dbReference>
<dbReference type="STRING" id="9031.ENSGALP00000051589"/>
<dbReference type="GlyGen" id="Q5ZJB4">
    <property type="glycosylation" value="2 sites"/>
</dbReference>
<dbReference type="PaxDb" id="9031-ENSGALP00000005196"/>
<dbReference type="GeneID" id="423669"/>
<dbReference type="KEGG" id="gga:423669"/>
<dbReference type="CTD" id="1147"/>
<dbReference type="VEuPathDB" id="HostDB:geneid_423669"/>
<dbReference type="eggNOG" id="KOG4250">
    <property type="taxonomic scope" value="Eukaryota"/>
</dbReference>
<dbReference type="InParanoid" id="Q5ZJB4"/>
<dbReference type="OrthoDB" id="267381at2759"/>
<dbReference type="PhylomeDB" id="Q5ZJB4"/>
<dbReference type="Reactome" id="R-GGA-1227739">
    <property type="pathway name" value="Caspase-8 and -10 mediated induction of NF-kB"/>
</dbReference>
<dbReference type="Reactome" id="R-GGA-1227892">
    <property type="pathway name" value="TRAF6 mediated NF-kB activation"/>
</dbReference>
<dbReference type="Reactome" id="R-GGA-434001">
    <property type="pathway name" value="TAK1 activates NFkB by phosphorylation and activation of IKKs complex"/>
</dbReference>
<dbReference type="Reactome" id="R-GGA-434131">
    <property type="pathway name" value="NFkB activation mediated by RIP1 complexed with activated TLR3"/>
</dbReference>
<dbReference type="PRO" id="PR:Q5ZJB4"/>
<dbReference type="Proteomes" id="UP000000539">
    <property type="component" value="Unassembled WGS sequence"/>
</dbReference>
<dbReference type="GO" id="GO:0005737">
    <property type="term" value="C:cytoplasm"/>
    <property type="evidence" value="ECO:0000318"/>
    <property type="project" value="GO_Central"/>
</dbReference>
<dbReference type="GO" id="GO:0005829">
    <property type="term" value="C:cytosol"/>
    <property type="evidence" value="ECO:0000304"/>
    <property type="project" value="Reactome"/>
</dbReference>
<dbReference type="GO" id="GO:0008385">
    <property type="term" value="C:IkappaB kinase complex"/>
    <property type="evidence" value="ECO:0000318"/>
    <property type="project" value="GO_Central"/>
</dbReference>
<dbReference type="GO" id="GO:0005634">
    <property type="term" value="C:nucleus"/>
    <property type="evidence" value="ECO:0007669"/>
    <property type="project" value="UniProtKB-SubCell"/>
</dbReference>
<dbReference type="GO" id="GO:0005524">
    <property type="term" value="F:ATP binding"/>
    <property type="evidence" value="ECO:0007669"/>
    <property type="project" value="UniProtKB-KW"/>
</dbReference>
<dbReference type="GO" id="GO:0008384">
    <property type="term" value="F:IkappaB kinase activity"/>
    <property type="evidence" value="ECO:0007669"/>
    <property type="project" value="UniProtKB-EC"/>
</dbReference>
<dbReference type="GO" id="GO:0046982">
    <property type="term" value="F:protein heterodimerization activity"/>
    <property type="evidence" value="ECO:0000250"/>
    <property type="project" value="UniProtKB"/>
</dbReference>
<dbReference type="GO" id="GO:0042803">
    <property type="term" value="F:protein homodimerization activity"/>
    <property type="evidence" value="ECO:0000250"/>
    <property type="project" value="UniProtKB"/>
</dbReference>
<dbReference type="GO" id="GO:0004674">
    <property type="term" value="F:protein serine/threonine kinase activity"/>
    <property type="evidence" value="ECO:0000318"/>
    <property type="project" value="GO_Central"/>
</dbReference>
<dbReference type="GO" id="GO:0071356">
    <property type="term" value="P:cellular response to tumor necrosis factor"/>
    <property type="evidence" value="ECO:0000250"/>
    <property type="project" value="UniProtKB"/>
</dbReference>
<dbReference type="GO" id="GO:0043123">
    <property type="term" value="P:positive regulation of canonical NF-kappaB signal transduction"/>
    <property type="evidence" value="ECO:0000318"/>
    <property type="project" value="GO_Central"/>
</dbReference>
<dbReference type="GO" id="GO:0045944">
    <property type="term" value="P:positive regulation of transcription by RNA polymerase II"/>
    <property type="evidence" value="ECO:0000250"/>
    <property type="project" value="UniProtKB"/>
</dbReference>
<dbReference type="GO" id="GO:0002224">
    <property type="term" value="P:toll-like receptor signaling pathway"/>
    <property type="evidence" value="ECO:0000304"/>
    <property type="project" value="AgBase"/>
</dbReference>
<dbReference type="GO" id="GO:0033209">
    <property type="term" value="P:tumor necrosis factor-mediated signaling pathway"/>
    <property type="evidence" value="ECO:0000318"/>
    <property type="project" value="GO_Central"/>
</dbReference>
<dbReference type="CDD" id="cd14039">
    <property type="entry name" value="STKc_IKK_alpha"/>
    <property type="match status" value="1"/>
</dbReference>
<dbReference type="CDD" id="cd17046">
    <property type="entry name" value="Ubl_IKKA_like"/>
    <property type="match status" value="1"/>
</dbReference>
<dbReference type="FunFam" id="1.20.1270.250:FF:000001">
    <property type="entry name" value="Inhibitor of nuclear factor kappa-B kinase subunit alpha"/>
    <property type="match status" value="1"/>
</dbReference>
<dbReference type="FunFam" id="3.10.20.90:FF:000061">
    <property type="entry name" value="Inhibitor of nuclear factor kappa-B kinase subunit alpha"/>
    <property type="match status" value="1"/>
</dbReference>
<dbReference type="FunFam" id="1.10.510.10:FF:000147">
    <property type="entry name" value="Inhibitor of nuclear factor kappa-B kinase subunit beta"/>
    <property type="match status" value="1"/>
</dbReference>
<dbReference type="Gene3D" id="1.20.1270.250">
    <property type="match status" value="1"/>
</dbReference>
<dbReference type="Gene3D" id="6.10.250.2110">
    <property type="match status" value="1"/>
</dbReference>
<dbReference type="Gene3D" id="3.10.20.90">
    <property type="entry name" value="Phosphatidylinositol 3-kinase Catalytic Subunit, Chain A, domain 1"/>
    <property type="match status" value="1"/>
</dbReference>
<dbReference type="Gene3D" id="1.10.510.10">
    <property type="entry name" value="Transferase(Phosphotransferase) domain 1"/>
    <property type="match status" value="1"/>
</dbReference>
<dbReference type="InterPro" id="IPR041185">
    <property type="entry name" value="IKBKB_SDD"/>
</dbReference>
<dbReference type="InterPro" id="IPR046375">
    <property type="entry name" value="IKBKB_SDD_sf"/>
</dbReference>
<dbReference type="InterPro" id="IPR051180">
    <property type="entry name" value="IKK"/>
</dbReference>
<dbReference type="InterPro" id="IPR022007">
    <property type="entry name" value="IKKbetaNEMObind"/>
</dbReference>
<dbReference type="InterPro" id="IPR011009">
    <property type="entry name" value="Kinase-like_dom_sf"/>
</dbReference>
<dbReference type="InterPro" id="IPR000719">
    <property type="entry name" value="Prot_kinase_dom"/>
</dbReference>
<dbReference type="InterPro" id="IPR017441">
    <property type="entry name" value="Protein_kinase_ATP_BS"/>
</dbReference>
<dbReference type="InterPro" id="IPR008271">
    <property type="entry name" value="Ser/Thr_kinase_AS"/>
</dbReference>
<dbReference type="PANTHER" id="PTHR22969">
    <property type="entry name" value="IKB KINASE"/>
    <property type="match status" value="1"/>
</dbReference>
<dbReference type="PANTHER" id="PTHR22969:SF13">
    <property type="entry name" value="INHIBITOR OF NUCLEAR FACTOR KAPPA-B KINASE SUBUNIT ALPHA"/>
    <property type="match status" value="1"/>
</dbReference>
<dbReference type="Pfam" id="PF18397">
    <property type="entry name" value="IKBKB_SDD"/>
    <property type="match status" value="1"/>
</dbReference>
<dbReference type="Pfam" id="PF12179">
    <property type="entry name" value="IKKbetaNEMObind"/>
    <property type="match status" value="1"/>
</dbReference>
<dbReference type="Pfam" id="PF00069">
    <property type="entry name" value="Pkinase"/>
    <property type="match status" value="1"/>
</dbReference>
<dbReference type="SMART" id="SM01239">
    <property type="entry name" value="IKKbetaNEMObind"/>
    <property type="match status" value="1"/>
</dbReference>
<dbReference type="SMART" id="SM00220">
    <property type="entry name" value="S_TKc"/>
    <property type="match status" value="1"/>
</dbReference>
<dbReference type="SUPFAM" id="SSF56112">
    <property type="entry name" value="Protein kinase-like (PK-like)"/>
    <property type="match status" value="1"/>
</dbReference>
<dbReference type="PROSITE" id="PS00107">
    <property type="entry name" value="PROTEIN_KINASE_ATP"/>
    <property type="match status" value="1"/>
</dbReference>
<dbReference type="PROSITE" id="PS50011">
    <property type="entry name" value="PROTEIN_KINASE_DOM"/>
    <property type="match status" value="1"/>
</dbReference>
<dbReference type="PROSITE" id="PS00108">
    <property type="entry name" value="PROTEIN_KINASE_ST"/>
    <property type="match status" value="1"/>
</dbReference>
<accession>Q5ZJB4</accession>
<sequence>MERGAERGPPPAPGGVALRGQPAGGCGPWEMRDRLGTGGFGNVCLYQHQDTGARVAIKSCRLELSVKNKDRWCHEIDIMKKLNHPNVVRACEVPEEMNFLVNDVPLLAMEYCSGGDLRKLLNKPENCCGLKESQILSLLSDIGSGIQYLHENRIIHRDLKPENIVLQDEGGKIIHKIIDLGYAKDLDQGSLCTSFVGTLQYLAPELFENKSYSVTVDYWSFGTMVFECIAGFRPFLHNLQPFTWHEKIKKKDPKHIFASEEMNGEVRFSTHLPQPHSICSLIVEPMESWLQLMLNWDPEQRGGGLDPETNSPKCFLLMDHILNLKIVHILNMTSAKIVSFLLHPEESLHFLQNRIESETGISTGNQELLLETGICLDPRKPASQCVIDGVRGWDSYMVYLFDKSKTVYDGPFASRSLSECVNYIVQDSKIQLPIPQLRKVWAEAVHYVIGLKEDYSRLFQGQRAAMLSLLRYNANLIKMKNNMVSASQQLKAKLEFFHQSIRLDLERYSDQMAYGISSEKMLKAWKEMEEKASHCAQAEDIGYLDEQIMALHTEIVELQKSPYARRQGEVMESLEQRAIDLYKQLKTRPPDHAYSDSTDMVKIIVQTVQSQDRVLKELFGHLSKLLGCKQKIIDLLPKIEVALNNIKEADNSEMQMQGKRQREIWHLLKIACTQSSSRSLVSSSLEGTASTPAATWVPQSSSEYAPHPLSSMATPGDGENFVDVIEENLNYLDRFSSMLQEAREEQNNSLTNFDWSWLK</sequence>
<protein>
    <recommendedName>
        <fullName>Inhibitor of nuclear factor kappa-B kinase subunit alpha</fullName>
        <shortName>I kappa-B kinase alpha</shortName>
        <shortName>IKK-A</shortName>
        <shortName>IKK-alpha</shortName>
        <shortName>IkBKA</shortName>
        <shortName>IkappaB kinase</shortName>
        <ecNumber evidence="2">2.7.11.10</ecNumber>
    </recommendedName>
    <alternativeName>
        <fullName>Conserved helix-loop-helix ubiquitous kinase</fullName>
    </alternativeName>
    <alternativeName>
        <fullName>Nuclear factor NF-kappa-B inhibitor kinase alpha</fullName>
        <shortName>NFKBIKA</shortName>
    </alternativeName>
</protein>
<gene>
    <name type="primary">CHUK</name>
    <name type="synonym">IKKA</name>
    <name type="ORF">RCJMB04_19h23</name>
</gene>
<proteinExistence type="evidence at transcript level"/>
<reference key="1">
    <citation type="journal article" date="2005" name="Genome Biol.">
        <title>Full-length cDNAs from chicken bursal lymphocytes to facilitate gene function analysis.</title>
        <authorList>
            <person name="Caldwell R.B."/>
            <person name="Kierzek A.M."/>
            <person name="Arakawa H."/>
            <person name="Bezzubov Y."/>
            <person name="Zaim J."/>
            <person name="Fiedler P."/>
            <person name="Kutter S."/>
            <person name="Blagodatski A."/>
            <person name="Kostovska D."/>
            <person name="Koter M."/>
            <person name="Plachy J."/>
            <person name="Carninci P."/>
            <person name="Hayashizaki Y."/>
            <person name="Buerstedde J.-M."/>
        </authorList>
    </citation>
    <scope>NUCLEOTIDE SEQUENCE [LARGE SCALE MRNA]</scope>
    <source>
        <strain>CB</strain>
        <tissue>Bursa of Fabricius</tissue>
    </source>
</reference>
<organism>
    <name type="scientific">Gallus gallus</name>
    <name type="common">Chicken</name>
    <dbReference type="NCBI Taxonomy" id="9031"/>
    <lineage>
        <taxon>Eukaryota</taxon>
        <taxon>Metazoa</taxon>
        <taxon>Chordata</taxon>
        <taxon>Craniata</taxon>
        <taxon>Vertebrata</taxon>
        <taxon>Euteleostomi</taxon>
        <taxon>Archelosauria</taxon>
        <taxon>Archosauria</taxon>
        <taxon>Dinosauria</taxon>
        <taxon>Saurischia</taxon>
        <taxon>Theropoda</taxon>
        <taxon>Coelurosauria</taxon>
        <taxon>Aves</taxon>
        <taxon>Neognathae</taxon>
        <taxon>Galloanserae</taxon>
        <taxon>Galliformes</taxon>
        <taxon>Phasianidae</taxon>
        <taxon>Phasianinae</taxon>
        <taxon>Gallus</taxon>
    </lineage>
</organism>
<comment type="function">
    <text evidence="2">Phosphorylates inhibitors of NF-kappa-B thus leading to the dissociation of the inhibitor/NF-kappa-B complex and ultimately the degradation of the inhibitor. Phosphorylates 'Ser-10' of histone H3 at NF-kappa-B-regulated promoters during inflammatory responses triggered by cytokines.</text>
</comment>
<comment type="catalytic activity">
    <reaction evidence="2">
        <text>L-seryl-[I-kappa-B protein] + ATP = O-phospho-L-seryl-[I-kappa-B protein] + ADP + H(+)</text>
        <dbReference type="Rhea" id="RHEA:19073"/>
        <dbReference type="Rhea" id="RHEA-COMP:13698"/>
        <dbReference type="Rhea" id="RHEA-COMP:13699"/>
        <dbReference type="ChEBI" id="CHEBI:15378"/>
        <dbReference type="ChEBI" id="CHEBI:29999"/>
        <dbReference type="ChEBI" id="CHEBI:30616"/>
        <dbReference type="ChEBI" id="CHEBI:83421"/>
        <dbReference type="ChEBI" id="CHEBI:456216"/>
        <dbReference type="EC" id="2.7.11.10"/>
    </reaction>
</comment>
<comment type="activity regulation">
    <text evidence="1">Activated when phosphorylated and inactivated when dephosphorylated.</text>
</comment>
<comment type="subcellular location">
    <subcellularLocation>
        <location evidence="1">Cytoplasm</location>
    </subcellularLocation>
    <subcellularLocation>
        <location evidence="1">Nucleus</location>
    </subcellularLocation>
    <text evidence="1">Shuttles between the cytoplasm and the nucleus.</text>
</comment>
<comment type="similarity">
    <text evidence="3">Belongs to the protein kinase superfamily. Ser/Thr protein kinase family. I-kappa-B kinase subfamily.</text>
</comment>
<feature type="chain" id="PRO_0000268160" description="Inhibitor of nuclear factor kappa-B kinase subunit alpha">
    <location>
        <begin position="1"/>
        <end position="759"/>
    </location>
</feature>
<feature type="domain" description="Protein kinase" evidence="3">
    <location>
        <begin position="29"/>
        <end position="316"/>
    </location>
</feature>
<feature type="region of interest" description="Disordered" evidence="5">
    <location>
        <begin position="1"/>
        <end position="20"/>
    </location>
</feature>
<feature type="region of interest" description="Leucine-zipper">
    <location>
        <begin position="469"/>
        <end position="490"/>
    </location>
</feature>
<feature type="region of interest" description="Disordered" evidence="5">
    <location>
        <begin position="691"/>
        <end position="715"/>
    </location>
</feature>
<feature type="region of interest" description="NEMO-binding" evidence="1">
    <location>
        <begin position="753"/>
        <end position="758"/>
    </location>
</feature>
<feature type="compositionally biased region" description="Polar residues" evidence="5">
    <location>
        <begin position="691"/>
        <end position="703"/>
    </location>
</feature>
<feature type="active site" description="Proton acceptor" evidence="3 4">
    <location>
        <position position="158"/>
    </location>
</feature>
<feature type="binding site" evidence="3">
    <location>
        <begin position="35"/>
        <end position="43"/>
    </location>
    <ligand>
        <name>ATP</name>
        <dbReference type="ChEBI" id="CHEBI:30616"/>
    </ligand>
</feature>
<feature type="binding site" evidence="3">
    <location>
        <position position="58"/>
    </location>
    <ligand>
        <name>ATP</name>
        <dbReference type="ChEBI" id="CHEBI:30616"/>
    </ligand>
</feature>
<keyword id="KW-0067">ATP-binding</keyword>
<keyword id="KW-0963">Cytoplasm</keyword>
<keyword id="KW-0418">Kinase</keyword>
<keyword id="KW-0547">Nucleotide-binding</keyword>
<keyword id="KW-0539">Nucleus</keyword>
<keyword id="KW-0597">Phosphoprotein</keyword>
<keyword id="KW-1185">Reference proteome</keyword>
<keyword id="KW-0723">Serine/threonine-protein kinase</keyword>
<keyword id="KW-0808">Transferase</keyword>
<name>IKKA_CHICK</name>
<evidence type="ECO:0000250" key="1"/>
<evidence type="ECO:0000250" key="2">
    <source>
        <dbReference type="UniProtKB" id="O15111"/>
    </source>
</evidence>
<evidence type="ECO:0000255" key="3">
    <source>
        <dbReference type="PROSITE-ProRule" id="PRU00159"/>
    </source>
</evidence>
<evidence type="ECO:0000255" key="4">
    <source>
        <dbReference type="PROSITE-ProRule" id="PRU10027"/>
    </source>
</evidence>
<evidence type="ECO:0000256" key="5">
    <source>
        <dbReference type="SAM" id="MobiDB-lite"/>
    </source>
</evidence>